<organism>
    <name type="scientific">Actinobacillus pleuropneumoniae serotype 7 (strain AP76)</name>
    <dbReference type="NCBI Taxonomy" id="537457"/>
    <lineage>
        <taxon>Bacteria</taxon>
        <taxon>Pseudomonadati</taxon>
        <taxon>Pseudomonadota</taxon>
        <taxon>Gammaproteobacteria</taxon>
        <taxon>Pasteurellales</taxon>
        <taxon>Pasteurellaceae</taxon>
        <taxon>Actinobacillus</taxon>
    </lineage>
</organism>
<comment type="function">
    <text evidence="1">Involved in the biogenesis of TorA. Acts on TorA before the insertion of the molybdenum cofactor and, as a result, probably favors a conformation of the apoenzyme that is competent for acquiring the cofactor.</text>
</comment>
<comment type="subcellular location">
    <subcellularLocation>
        <location evidence="1">Cytoplasm</location>
    </subcellularLocation>
</comment>
<comment type="similarity">
    <text evidence="1">Belongs to the TorD/DmsD family. TorD subfamily.</text>
</comment>
<comment type="sequence caution" evidence="2">
    <conflict type="erroneous initiation">
        <sequence resource="EMBL-CDS" id="ACE62535"/>
    </conflict>
    <text>Extended N-terminus.</text>
</comment>
<sequence length="199" mass="22980">MAHSQLLSSEERLFCYRWFHSLLAKELSEPQLQALQAGQFASFFALLAELGFQPQVTDLQNELAKLTAYDSPRLELAADFAQCFLLEGKLSALPYASYYLDERDLSENLAVMDQWLTKFQLKINRLHNEPSDHLCIYLEVLIKLIETEQPVQVQQQFIRQQLLGWLPQWAEKTAQIHSSTAFYQIISNLLLGFLQQDIA</sequence>
<gene>
    <name evidence="1" type="primary">torD</name>
    <name type="ordered locus">APP7_1883</name>
</gene>
<protein>
    <recommendedName>
        <fullName evidence="1">Chaperone protein TorD</fullName>
    </recommendedName>
</protein>
<feature type="chain" id="PRO_0000414888" description="Chaperone protein TorD">
    <location>
        <begin position="1"/>
        <end position="199"/>
    </location>
</feature>
<accession>B3GZ49</accession>
<evidence type="ECO:0000255" key="1">
    <source>
        <dbReference type="HAMAP-Rule" id="MF_01150"/>
    </source>
</evidence>
<evidence type="ECO:0000305" key="2"/>
<keyword id="KW-0143">Chaperone</keyword>
<keyword id="KW-0963">Cytoplasm</keyword>
<reference key="1">
    <citation type="submission" date="2008-06" db="EMBL/GenBank/DDBJ databases">
        <title>Genome and proteome analysis of A. pleuropneumoniae serotype 7.</title>
        <authorList>
            <person name="Linke B."/>
            <person name="Buettner F."/>
            <person name="Martinez-Arias R."/>
            <person name="Goesmann A."/>
            <person name="Baltes N."/>
            <person name="Tegetmeyer H."/>
            <person name="Singh M."/>
            <person name="Gerlach G.F."/>
        </authorList>
    </citation>
    <scope>NUCLEOTIDE SEQUENCE [LARGE SCALE GENOMIC DNA]</scope>
    <source>
        <strain>AP76</strain>
    </source>
</reference>
<name>TORD_ACTP7</name>
<dbReference type="EMBL" id="CP001091">
    <property type="protein sequence ID" value="ACE62535.1"/>
    <property type="status" value="ALT_INIT"/>
    <property type="molecule type" value="Genomic_DNA"/>
</dbReference>
<dbReference type="RefSeq" id="WP_005616167.1">
    <property type="nucleotide sequence ID" value="NC_010939.1"/>
</dbReference>
<dbReference type="SMR" id="B3GZ49"/>
<dbReference type="KEGG" id="apa:APP7_1883"/>
<dbReference type="HOGENOM" id="CLU_077650_4_0_6"/>
<dbReference type="Proteomes" id="UP000001226">
    <property type="component" value="Chromosome"/>
</dbReference>
<dbReference type="GO" id="GO:0005737">
    <property type="term" value="C:cytoplasm"/>
    <property type="evidence" value="ECO:0007669"/>
    <property type="project" value="UniProtKB-SubCell"/>
</dbReference>
<dbReference type="GO" id="GO:0051259">
    <property type="term" value="P:protein complex oligomerization"/>
    <property type="evidence" value="ECO:0007669"/>
    <property type="project" value="InterPro"/>
</dbReference>
<dbReference type="GO" id="GO:0006457">
    <property type="term" value="P:protein folding"/>
    <property type="evidence" value="ECO:0007669"/>
    <property type="project" value="UniProtKB-UniRule"/>
</dbReference>
<dbReference type="Gene3D" id="1.20.120.1820">
    <property type="match status" value="1"/>
</dbReference>
<dbReference type="Gene3D" id="1.20.1280.20">
    <property type="entry name" value="HscB, C-terminal domain"/>
    <property type="match status" value="1"/>
</dbReference>
<dbReference type="HAMAP" id="MF_01150">
    <property type="entry name" value="TorD"/>
    <property type="match status" value="1"/>
</dbReference>
<dbReference type="InterPro" id="IPR023069">
    <property type="entry name" value="Chaperone_TorD"/>
</dbReference>
<dbReference type="InterPro" id="IPR020945">
    <property type="entry name" value="DMSO/NO3_reduct_chaperone"/>
</dbReference>
<dbReference type="InterPro" id="IPR036386">
    <property type="entry name" value="HscB_C_sf"/>
</dbReference>
<dbReference type="InterPro" id="IPR036411">
    <property type="entry name" value="TorD-like_sf"/>
</dbReference>
<dbReference type="InterPro" id="IPR050289">
    <property type="entry name" value="TorD/DmsD_chaperones"/>
</dbReference>
<dbReference type="NCBIfam" id="NF003442">
    <property type="entry name" value="PRK04976.1"/>
    <property type="match status" value="1"/>
</dbReference>
<dbReference type="PANTHER" id="PTHR34227:SF11">
    <property type="entry name" value="CHAPERONE PROTEIN TORD"/>
    <property type="match status" value="1"/>
</dbReference>
<dbReference type="PANTHER" id="PTHR34227">
    <property type="entry name" value="CHAPERONE PROTEIN YCDY"/>
    <property type="match status" value="1"/>
</dbReference>
<dbReference type="Pfam" id="PF02613">
    <property type="entry name" value="Nitrate_red_del"/>
    <property type="match status" value="1"/>
</dbReference>
<dbReference type="SUPFAM" id="SSF89155">
    <property type="entry name" value="TorD-like"/>
    <property type="match status" value="1"/>
</dbReference>
<proteinExistence type="inferred from homology"/>